<comment type="function">
    <text evidence="1">One of the primary rRNA binding proteins, it binds specifically to the 5'-end of 16S ribosomal RNA.</text>
</comment>
<comment type="subunit">
    <text evidence="1">Part of the 30S ribosomal subunit.</text>
</comment>
<comment type="similarity">
    <text evidence="1">Belongs to the universal ribosomal protein uS17 family.</text>
</comment>
<dbReference type="EMBL" id="CP000323">
    <property type="protein sequence ID" value="ABE74276.1"/>
    <property type="molecule type" value="Genomic_DNA"/>
</dbReference>
<dbReference type="RefSeq" id="WP_011512856.1">
    <property type="nucleotide sequence ID" value="NC_007969.1"/>
</dbReference>
<dbReference type="SMR" id="Q1QDH7"/>
<dbReference type="STRING" id="335284.Pcryo_0493"/>
<dbReference type="KEGG" id="pcr:Pcryo_0493"/>
<dbReference type="eggNOG" id="COG0186">
    <property type="taxonomic scope" value="Bacteria"/>
</dbReference>
<dbReference type="HOGENOM" id="CLU_073626_1_1_6"/>
<dbReference type="Proteomes" id="UP000002425">
    <property type="component" value="Chromosome"/>
</dbReference>
<dbReference type="GO" id="GO:0022627">
    <property type="term" value="C:cytosolic small ribosomal subunit"/>
    <property type="evidence" value="ECO:0007669"/>
    <property type="project" value="TreeGrafter"/>
</dbReference>
<dbReference type="GO" id="GO:0019843">
    <property type="term" value="F:rRNA binding"/>
    <property type="evidence" value="ECO:0007669"/>
    <property type="project" value="UniProtKB-UniRule"/>
</dbReference>
<dbReference type="GO" id="GO:0003735">
    <property type="term" value="F:structural constituent of ribosome"/>
    <property type="evidence" value="ECO:0007669"/>
    <property type="project" value="InterPro"/>
</dbReference>
<dbReference type="GO" id="GO:0006412">
    <property type="term" value="P:translation"/>
    <property type="evidence" value="ECO:0007669"/>
    <property type="project" value="UniProtKB-UniRule"/>
</dbReference>
<dbReference type="CDD" id="cd00364">
    <property type="entry name" value="Ribosomal_uS17"/>
    <property type="match status" value="1"/>
</dbReference>
<dbReference type="Gene3D" id="2.40.50.140">
    <property type="entry name" value="Nucleic acid-binding proteins"/>
    <property type="match status" value="1"/>
</dbReference>
<dbReference type="HAMAP" id="MF_01345_B">
    <property type="entry name" value="Ribosomal_uS17_B"/>
    <property type="match status" value="1"/>
</dbReference>
<dbReference type="InterPro" id="IPR012340">
    <property type="entry name" value="NA-bd_OB-fold"/>
</dbReference>
<dbReference type="InterPro" id="IPR000266">
    <property type="entry name" value="Ribosomal_uS17"/>
</dbReference>
<dbReference type="InterPro" id="IPR019984">
    <property type="entry name" value="Ribosomal_uS17_bact/chlr"/>
</dbReference>
<dbReference type="InterPro" id="IPR019979">
    <property type="entry name" value="Ribosomal_uS17_CS"/>
</dbReference>
<dbReference type="NCBIfam" id="NF004123">
    <property type="entry name" value="PRK05610.1"/>
    <property type="match status" value="1"/>
</dbReference>
<dbReference type="NCBIfam" id="TIGR03635">
    <property type="entry name" value="uS17_bact"/>
    <property type="match status" value="1"/>
</dbReference>
<dbReference type="PANTHER" id="PTHR10744">
    <property type="entry name" value="40S RIBOSOMAL PROTEIN S11 FAMILY MEMBER"/>
    <property type="match status" value="1"/>
</dbReference>
<dbReference type="PANTHER" id="PTHR10744:SF1">
    <property type="entry name" value="SMALL RIBOSOMAL SUBUNIT PROTEIN US17M"/>
    <property type="match status" value="1"/>
</dbReference>
<dbReference type="Pfam" id="PF00366">
    <property type="entry name" value="Ribosomal_S17"/>
    <property type="match status" value="1"/>
</dbReference>
<dbReference type="PRINTS" id="PR00973">
    <property type="entry name" value="RIBOSOMALS17"/>
</dbReference>
<dbReference type="SUPFAM" id="SSF50249">
    <property type="entry name" value="Nucleic acid-binding proteins"/>
    <property type="match status" value="1"/>
</dbReference>
<dbReference type="PROSITE" id="PS00056">
    <property type="entry name" value="RIBOSOMAL_S17"/>
    <property type="match status" value="1"/>
</dbReference>
<accession>Q1QDH7</accession>
<sequence length="91" mass="10360">MSDNNQATTNASVLTGRVVSDKMDKSITVLIERLVRHPLYGKQLRRSTKIKAHDENNVCQQGDLVRIKETRPISKTKSWTLVDVVEKVEKI</sequence>
<name>RS17_PSYCK</name>
<evidence type="ECO:0000255" key="1">
    <source>
        <dbReference type="HAMAP-Rule" id="MF_01345"/>
    </source>
</evidence>
<evidence type="ECO:0000305" key="2"/>
<organism>
    <name type="scientific">Psychrobacter cryohalolentis (strain ATCC BAA-1226 / DSM 17306 / VKM B-2378 / K5)</name>
    <dbReference type="NCBI Taxonomy" id="335284"/>
    <lineage>
        <taxon>Bacteria</taxon>
        <taxon>Pseudomonadati</taxon>
        <taxon>Pseudomonadota</taxon>
        <taxon>Gammaproteobacteria</taxon>
        <taxon>Moraxellales</taxon>
        <taxon>Moraxellaceae</taxon>
        <taxon>Psychrobacter</taxon>
    </lineage>
</organism>
<gene>
    <name evidence="1" type="primary">rpsQ</name>
    <name type="ordered locus">Pcryo_0493</name>
</gene>
<reference key="1">
    <citation type="submission" date="2006-03" db="EMBL/GenBank/DDBJ databases">
        <title>Complete sequence of chromosome of Psychrobacter cryohalolentis K5.</title>
        <authorList>
            <consortium name="US DOE Joint Genome Institute"/>
            <person name="Copeland A."/>
            <person name="Lucas S."/>
            <person name="Lapidus A."/>
            <person name="Barry K."/>
            <person name="Detter J.C."/>
            <person name="Glavina T."/>
            <person name="Hammon N."/>
            <person name="Israni S."/>
            <person name="Dalin E."/>
            <person name="Tice H."/>
            <person name="Pitluck S."/>
            <person name="Brettin T."/>
            <person name="Bruce D."/>
            <person name="Han C."/>
            <person name="Tapia R."/>
            <person name="Sims D.R."/>
            <person name="Gilna P."/>
            <person name="Schmutz J."/>
            <person name="Larimer F."/>
            <person name="Land M."/>
            <person name="Hauser L."/>
            <person name="Kyrpides N."/>
            <person name="Kim E."/>
            <person name="Richardson P."/>
        </authorList>
    </citation>
    <scope>NUCLEOTIDE SEQUENCE [LARGE SCALE GENOMIC DNA]</scope>
    <source>
        <strain>ATCC BAA-1226 / DSM 17306 / VKM B-2378 / K5</strain>
    </source>
</reference>
<protein>
    <recommendedName>
        <fullName evidence="1">Small ribosomal subunit protein uS17</fullName>
    </recommendedName>
    <alternativeName>
        <fullName evidence="2">30S ribosomal protein S17</fullName>
    </alternativeName>
</protein>
<proteinExistence type="inferred from homology"/>
<keyword id="KW-0687">Ribonucleoprotein</keyword>
<keyword id="KW-0689">Ribosomal protein</keyword>
<keyword id="KW-0694">RNA-binding</keyword>
<keyword id="KW-0699">rRNA-binding</keyword>
<feature type="chain" id="PRO_0000255689" description="Small ribosomal subunit protein uS17">
    <location>
        <begin position="1"/>
        <end position="91"/>
    </location>
</feature>